<gene>
    <name type="ordered locus">MIMI_R598</name>
</gene>
<organismHost>
    <name type="scientific">Acanthamoeba polyphaga</name>
    <name type="common">Amoeba</name>
    <dbReference type="NCBI Taxonomy" id="5757"/>
</organismHost>
<sequence>MDDQPINIVTDIKNAICKDDLDSFIILMENNPSINLFCEPDKQSIDFGGIIQPIEFCKNNDLIKMVNEVDDQLIDHYISTVLREEVIKNCSVKILKYLFDMGLPVDFGRNFSIRLCSTKYLGSNHYIKENPGQDTLSLLRLLIEYGVDVNAHNYLPLYSAVSSKNFDKVKLLVENGANVLRVANGNENSFYFKIDSIKYLLDNGVEIDMNLSRALFLSIKDNSIECIQFYLELGADINKISPMDIIGLIKLRNIVGIRLLIENGFDFTSLNKLAGNNNERIIDVLINEANVDISALLKILLEFW</sequence>
<dbReference type="EMBL" id="AY653733">
    <property type="protein sequence ID" value="AAV50861.1"/>
    <property type="molecule type" value="Genomic_DNA"/>
</dbReference>
<dbReference type="SMR" id="Q5UP65"/>
<dbReference type="KEGG" id="vg:9925235"/>
<dbReference type="Proteomes" id="UP000001134">
    <property type="component" value="Genome"/>
</dbReference>
<dbReference type="Gene3D" id="1.25.40.20">
    <property type="entry name" value="Ankyrin repeat-containing domain"/>
    <property type="match status" value="1"/>
</dbReference>
<dbReference type="InterPro" id="IPR002110">
    <property type="entry name" value="Ankyrin_rpt"/>
</dbReference>
<dbReference type="InterPro" id="IPR036770">
    <property type="entry name" value="Ankyrin_rpt-contain_sf"/>
</dbReference>
<dbReference type="InterPro" id="IPR050745">
    <property type="entry name" value="Multifunctional_regulatory"/>
</dbReference>
<dbReference type="PANTHER" id="PTHR24189">
    <property type="entry name" value="MYOTROPHIN"/>
    <property type="match status" value="1"/>
</dbReference>
<dbReference type="SMART" id="SM00248">
    <property type="entry name" value="ANK"/>
    <property type="match status" value="5"/>
</dbReference>
<dbReference type="SUPFAM" id="SSF48403">
    <property type="entry name" value="Ankyrin repeat"/>
    <property type="match status" value="1"/>
</dbReference>
<dbReference type="PROSITE" id="PS50297">
    <property type="entry name" value="ANK_REP_REGION"/>
    <property type="match status" value="1"/>
</dbReference>
<dbReference type="PROSITE" id="PS50088">
    <property type="entry name" value="ANK_REPEAT"/>
    <property type="match status" value="1"/>
</dbReference>
<organism>
    <name type="scientific">Acanthamoeba polyphaga mimivirus</name>
    <name type="common">APMV</name>
    <dbReference type="NCBI Taxonomy" id="212035"/>
    <lineage>
        <taxon>Viruses</taxon>
        <taxon>Varidnaviria</taxon>
        <taxon>Bamfordvirae</taxon>
        <taxon>Nucleocytoviricota</taxon>
        <taxon>Megaviricetes</taxon>
        <taxon>Imitervirales</taxon>
        <taxon>Mimiviridae</taxon>
        <taxon>Megamimivirinae</taxon>
        <taxon>Mimivirus</taxon>
        <taxon>Mimivirus bradfordmassiliense</taxon>
    </lineage>
</organism>
<feature type="chain" id="PRO_0000067177" description="Putative ankyrin repeat protein R598">
    <location>
        <begin position="1"/>
        <end position="304"/>
    </location>
</feature>
<feature type="repeat" description="ANK 1">
    <location>
        <begin position="7"/>
        <end position="36"/>
    </location>
</feature>
<feature type="repeat" description="ANK 2">
    <location>
        <begin position="77"/>
        <end position="107"/>
    </location>
</feature>
<feature type="repeat" description="ANK 3">
    <location>
        <begin position="122"/>
        <end position="151"/>
    </location>
</feature>
<feature type="repeat" description="ANK 4">
    <location>
        <begin position="152"/>
        <end position="181"/>
    </location>
</feature>
<feature type="repeat" description="ANK 5">
    <location>
        <begin position="183"/>
        <end position="209"/>
    </location>
</feature>
<feature type="repeat" description="ANK 6">
    <location>
        <begin position="210"/>
        <end position="239"/>
    </location>
</feature>
<feature type="repeat" description="ANK 7">
    <location>
        <begin position="265"/>
        <end position="293"/>
    </location>
</feature>
<keyword id="KW-0040">ANK repeat</keyword>
<keyword id="KW-1185">Reference proteome</keyword>
<keyword id="KW-0677">Repeat</keyword>
<accession>Q5UP65</accession>
<name>YR598_MIMIV</name>
<reference key="1">
    <citation type="journal article" date="2004" name="Science">
        <title>The 1.2-megabase genome sequence of Mimivirus.</title>
        <authorList>
            <person name="Raoult D."/>
            <person name="Audic S."/>
            <person name="Robert C."/>
            <person name="Abergel C."/>
            <person name="Renesto P."/>
            <person name="Ogata H."/>
            <person name="La Scola B."/>
            <person name="Susan M."/>
            <person name="Claverie J.-M."/>
        </authorList>
    </citation>
    <scope>NUCLEOTIDE SEQUENCE [LARGE SCALE GENOMIC DNA]</scope>
    <source>
        <strain>Rowbotham-Bradford</strain>
    </source>
</reference>
<protein>
    <recommendedName>
        <fullName>Putative ankyrin repeat protein R598</fullName>
    </recommendedName>
</protein>
<proteinExistence type="predicted"/>